<sequence length="138" mass="15491">MATRTQARGAVVELLYAFESGNEEIKKIASSMLEEKKIKNNQLAFALSLFNGVLEKINEIDALIEPHLKDWDFKRLGSMEKAILRLGAYEIGFTPTQNPIIINECIELGKLYAEPNTPKFLNAILDSLSKKLAQKPLN</sequence>
<organism>
    <name type="scientific">Helicobacter pylori (strain Shi470)</name>
    <dbReference type="NCBI Taxonomy" id="512562"/>
    <lineage>
        <taxon>Bacteria</taxon>
        <taxon>Pseudomonadati</taxon>
        <taxon>Campylobacterota</taxon>
        <taxon>Epsilonproteobacteria</taxon>
        <taxon>Campylobacterales</taxon>
        <taxon>Helicobacteraceae</taxon>
        <taxon>Helicobacter</taxon>
    </lineage>
</organism>
<reference key="1">
    <citation type="submission" date="2008-05" db="EMBL/GenBank/DDBJ databases">
        <title>Genome sequence of Helicobacter pylori from the remote Amazon: traces of Asian ancestry of the first Americans.</title>
        <authorList>
            <person name="Kersulyte D."/>
            <person name="Kalia A."/>
            <person name="Gilman R.H."/>
            <person name="Berg D.E."/>
        </authorList>
    </citation>
    <scope>NUCLEOTIDE SEQUENCE [LARGE SCALE GENOMIC DNA]</scope>
    <source>
        <strain>Shi470</strain>
    </source>
</reference>
<protein>
    <recommendedName>
        <fullName evidence="1">Transcription antitermination protein NusB</fullName>
    </recommendedName>
    <alternativeName>
        <fullName evidence="1">Antitermination factor NusB</fullName>
    </alternativeName>
</protein>
<name>NUSB_HELPS</name>
<proteinExistence type="inferred from homology"/>
<keyword id="KW-0694">RNA-binding</keyword>
<keyword id="KW-0804">Transcription</keyword>
<keyword id="KW-0889">Transcription antitermination</keyword>
<keyword id="KW-0805">Transcription regulation</keyword>
<evidence type="ECO:0000255" key="1">
    <source>
        <dbReference type="HAMAP-Rule" id="MF_00073"/>
    </source>
</evidence>
<feature type="chain" id="PRO_1000092559" description="Transcription antitermination protein NusB">
    <location>
        <begin position="1"/>
        <end position="138"/>
    </location>
</feature>
<comment type="function">
    <text evidence="1">Involved in transcription antitermination. Required for transcription of ribosomal RNA (rRNA) genes. Binds specifically to the boxA antiterminator sequence of the ribosomal RNA (rrn) operons.</text>
</comment>
<comment type="similarity">
    <text evidence="1">Belongs to the NusB family.</text>
</comment>
<accession>B2UW05</accession>
<gene>
    <name evidence="1" type="primary">nusB</name>
    <name type="ordered locus">HPSH_00005</name>
</gene>
<dbReference type="EMBL" id="CP001072">
    <property type="protein sequence ID" value="ACD47470.1"/>
    <property type="molecule type" value="Genomic_DNA"/>
</dbReference>
<dbReference type="RefSeq" id="WP_000235739.1">
    <property type="nucleotide sequence ID" value="NC_010698.2"/>
</dbReference>
<dbReference type="SMR" id="B2UW05"/>
<dbReference type="GeneID" id="93237463"/>
<dbReference type="KEGG" id="hps:HPSH_00005"/>
<dbReference type="HOGENOM" id="CLU_087843_3_3_7"/>
<dbReference type="GO" id="GO:0005829">
    <property type="term" value="C:cytosol"/>
    <property type="evidence" value="ECO:0007669"/>
    <property type="project" value="TreeGrafter"/>
</dbReference>
<dbReference type="GO" id="GO:0003723">
    <property type="term" value="F:RNA binding"/>
    <property type="evidence" value="ECO:0007669"/>
    <property type="project" value="UniProtKB-UniRule"/>
</dbReference>
<dbReference type="GO" id="GO:0006353">
    <property type="term" value="P:DNA-templated transcription termination"/>
    <property type="evidence" value="ECO:0007669"/>
    <property type="project" value="UniProtKB-UniRule"/>
</dbReference>
<dbReference type="GO" id="GO:0031564">
    <property type="term" value="P:transcription antitermination"/>
    <property type="evidence" value="ECO:0007669"/>
    <property type="project" value="UniProtKB-KW"/>
</dbReference>
<dbReference type="CDD" id="cd00619">
    <property type="entry name" value="Terminator_NusB"/>
    <property type="match status" value="1"/>
</dbReference>
<dbReference type="FunFam" id="1.10.940.10:FF:000004">
    <property type="entry name" value="Transcription antitermination protein NusB"/>
    <property type="match status" value="1"/>
</dbReference>
<dbReference type="Gene3D" id="1.10.940.10">
    <property type="entry name" value="NusB-like"/>
    <property type="match status" value="1"/>
</dbReference>
<dbReference type="HAMAP" id="MF_00073">
    <property type="entry name" value="NusB"/>
    <property type="match status" value="1"/>
</dbReference>
<dbReference type="InterPro" id="IPR035926">
    <property type="entry name" value="NusB-like_sf"/>
</dbReference>
<dbReference type="InterPro" id="IPR011605">
    <property type="entry name" value="NusB_fam"/>
</dbReference>
<dbReference type="InterPro" id="IPR006027">
    <property type="entry name" value="NusB_RsmB_TIM44"/>
</dbReference>
<dbReference type="NCBIfam" id="TIGR01951">
    <property type="entry name" value="nusB"/>
    <property type="match status" value="1"/>
</dbReference>
<dbReference type="PANTHER" id="PTHR11078:SF3">
    <property type="entry name" value="ANTITERMINATION NUSB DOMAIN-CONTAINING PROTEIN"/>
    <property type="match status" value="1"/>
</dbReference>
<dbReference type="PANTHER" id="PTHR11078">
    <property type="entry name" value="N UTILIZATION SUBSTANCE PROTEIN B-RELATED"/>
    <property type="match status" value="1"/>
</dbReference>
<dbReference type="Pfam" id="PF01029">
    <property type="entry name" value="NusB"/>
    <property type="match status" value="1"/>
</dbReference>
<dbReference type="SUPFAM" id="SSF48013">
    <property type="entry name" value="NusB-like"/>
    <property type="match status" value="1"/>
</dbReference>